<accession>Q9C5P1</accession>
<accession>Q9LMU9</accession>
<dbReference type="EC" id="2.1.1.-" evidence="2"/>
<dbReference type="EC" id="2.1.1.367" evidence="2"/>
<dbReference type="EMBL" id="AF344450">
    <property type="protein sequence ID" value="AAK28972.1"/>
    <property type="molecule type" value="mRNA"/>
</dbReference>
<dbReference type="EMBL" id="AC034106">
    <property type="protein sequence ID" value="AAF97258.1"/>
    <property type="status" value="ALT_SEQ"/>
    <property type="molecule type" value="Genomic_DNA"/>
</dbReference>
<dbReference type="EMBL" id="CP002684">
    <property type="protein sequence ID" value="AEE29634.1"/>
    <property type="molecule type" value="Genomic_DNA"/>
</dbReference>
<dbReference type="PIR" id="G86312">
    <property type="entry name" value="G86312"/>
</dbReference>
<dbReference type="RefSeq" id="NP_564036.1">
    <property type="nucleotide sequence ID" value="NM_101640.1"/>
</dbReference>
<dbReference type="SMR" id="Q9C5P1"/>
<dbReference type="BioGRID" id="23594">
    <property type="interactions" value="1"/>
</dbReference>
<dbReference type="FunCoup" id="Q9C5P1">
    <property type="interactions" value="1"/>
</dbReference>
<dbReference type="STRING" id="3702.Q9C5P1"/>
<dbReference type="PaxDb" id="3702-AT1G17770.1"/>
<dbReference type="EnsemblPlants" id="AT1G17770.1">
    <property type="protein sequence ID" value="AT1G17770.1"/>
    <property type="gene ID" value="AT1G17770"/>
</dbReference>
<dbReference type="GeneID" id="838355"/>
<dbReference type="Gramene" id="AT1G17770.1">
    <property type="protein sequence ID" value="AT1G17770.1"/>
    <property type="gene ID" value="AT1G17770"/>
</dbReference>
<dbReference type="KEGG" id="ath:AT1G17770"/>
<dbReference type="Araport" id="AT1G17770"/>
<dbReference type="TAIR" id="AT1G17770">
    <property type="gene designation" value="SUVH7"/>
</dbReference>
<dbReference type="eggNOG" id="KOG1082">
    <property type="taxonomic scope" value="Eukaryota"/>
</dbReference>
<dbReference type="HOGENOM" id="CLU_004556_2_1_1"/>
<dbReference type="InParanoid" id="Q9C5P1"/>
<dbReference type="OMA" id="RTIWPSN"/>
<dbReference type="OrthoDB" id="616263at2759"/>
<dbReference type="PhylomeDB" id="Q9C5P1"/>
<dbReference type="PRO" id="PR:Q9C5P1"/>
<dbReference type="Proteomes" id="UP000006548">
    <property type="component" value="Chromosome 1"/>
</dbReference>
<dbReference type="ExpressionAtlas" id="Q9C5P1">
    <property type="expression patterns" value="baseline and differential"/>
</dbReference>
<dbReference type="GO" id="GO:0000775">
    <property type="term" value="C:chromosome, centromeric region"/>
    <property type="evidence" value="ECO:0007669"/>
    <property type="project" value="UniProtKB-SubCell"/>
</dbReference>
<dbReference type="GO" id="GO:0005634">
    <property type="term" value="C:nucleus"/>
    <property type="evidence" value="ECO:0007669"/>
    <property type="project" value="UniProtKB-SubCell"/>
</dbReference>
<dbReference type="GO" id="GO:0003677">
    <property type="term" value="F:DNA binding"/>
    <property type="evidence" value="ECO:0007669"/>
    <property type="project" value="UniProtKB-KW"/>
</dbReference>
<dbReference type="GO" id="GO:0140947">
    <property type="term" value="F:histone H3K9me2 methyltransferase activity"/>
    <property type="evidence" value="ECO:0007669"/>
    <property type="project" value="RHEA"/>
</dbReference>
<dbReference type="GO" id="GO:0008270">
    <property type="term" value="F:zinc ion binding"/>
    <property type="evidence" value="ECO:0007669"/>
    <property type="project" value="InterPro"/>
</dbReference>
<dbReference type="GO" id="GO:0032259">
    <property type="term" value="P:methylation"/>
    <property type="evidence" value="ECO:0007669"/>
    <property type="project" value="UniProtKB-KW"/>
</dbReference>
<dbReference type="Gene3D" id="2.170.270.10">
    <property type="entry name" value="SET domain"/>
    <property type="match status" value="1"/>
</dbReference>
<dbReference type="Gene3D" id="2.30.280.10">
    <property type="entry name" value="SRA-YDG"/>
    <property type="match status" value="1"/>
</dbReference>
<dbReference type="InterPro" id="IPR025794">
    <property type="entry name" value="H3-K9-MeTrfase_plant"/>
</dbReference>
<dbReference type="InterPro" id="IPR051357">
    <property type="entry name" value="H3K9_HMTase_SUVAR3-9"/>
</dbReference>
<dbReference type="InterPro" id="IPR003616">
    <property type="entry name" value="Post-SET_dom"/>
</dbReference>
<dbReference type="InterPro" id="IPR007728">
    <property type="entry name" value="Pre-SET_dom"/>
</dbReference>
<dbReference type="InterPro" id="IPR015947">
    <property type="entry name" value="PUA-like_sf"/>
</dbReference>
<dbReference type="InterPro" id="IPR001214">
    <property type="entry name" value="SET_dom"/>
</dbReference>
<dbReference type="InterPro" id="IPR046341">
    <property type="entry name" value="SET_dom_sf"/>
</dbReference>
<dbReference type="InterPro" id="IPR036987">
    <property type="entry name" value="SRA-YDG_sf"/>
</dbReference>
<dbReference type="InterPro" id="IPR003105">
    <property type="entry name" value="SRA_YDG"/>
</dbReference>
<dbReference type="PANTHER" id="PTHR45660">
    <property type="entry name" value="HISTONE-LYSINE N-METHYLTRANSFERASE SETMAR"/>
    <property type="match status" value="1"/>
</dbReference>
<dbReference type="PANTHER" id="PTHR45660:SF18">
    <property type="entry name" value="HISTONE-LYSINE N-METHYLTRANSFERASE, H3 LYSINE-9 SPECIFIC SUVH7-RELATED"/>
    <property type="match status" value="1"/>
</dbReference>
<dbReference type="Pfam" id="PF05033">
    <property type="entry name" value="Pre-SET"/>
    <property type="match status" value="1"/>
</dbReference>
<dbReference type="Pfam" id="PF02182">
    <property type="entry name" value="SAD_SRA"/>
    <property type="match status" value="1"/>
</dbReference>
<dbReference type="Pfam" id="PF00856">
    <property type="entry name" value="SET"/>
    <property type="match status" value="1"/>
</dbReference>
<dbReference type="SMART" id="SM00468">
    <property type="entry name" value="PreSET"/>
    <property type="match status" value="1"/>
</dbReference>
<dbReference type="SMART" id="SM00317">
    <property type="entry name" value="SET"/>
    <property type="match status" value="1"/>
</dbReference>
<dbReference type="SMART" id="SM00466">
    <property type="entry name" value="SRA"/>
    <property type="match status" value="1"/>
</dbReference>
<dbReference type="SUPFAM" id="SSF88697">
    <property type="entry name" value="PUA domain-like"/>
    <property type="match status" value="1"/>
</dbReference>
<dbReference type="SUPFAM" id="SSF82199">
    <property type="entry name" value="SET domain"/>
    <property type="match status" value="1"/>
</dbReference>
<dbReference type="PROSITE" id="PS50868">
    <property type="entry name" value="POST_SET"/>
    <property type="match status" value="1"/>
</dbReference>
<dbReference type="PROSITE" id="PS50867">
    <property type="entry name" value="PRE_SET"/>
    <property type="match status" value="1"/>
</dbReference>
<dbReference type="PROSITE" id="PS51575">
    <property type="entry name" value="SAM_MT43_SUVAR39_2"/>
    <property type="match status" value="1"/>
</dbReference>
<dbReference type="PROSITE" id="PS50280">
    <property type="entry name" value="SET"/>
    <property type="match status" value="1"/>
</dbReference>
<dbReference type="PROSITE" id="PS51015">
    <property type="entry name" value="YDG"/>
    <property type="match status" value="1"/>
</dbReference>
<keyword id="KW-0137">Centromere</keyword>
<keyword id="KW-0156">Chromatin regulator</keyword>
<keyword id="KW-0158">Chromosome</keyword>
<keyword id="KW-0238">DNA-binding</keyword>
<keyword id="KW-0479">Metal-binding</keyword>
<keyword id="KW-0489">Methyltransferase</keyword>
<keyword id="KW-0539">Nucleus</keyword>
<keyword id="KW-1185">Reference proteome</keyword>
<keyword id="KW-0949">S-adenosyl-L-methionine</keyword>
<keyword id="KW-0808">Transferase</keyword>
<keyword id="KW-0862">Zinc</keyword>
<organism>
    <name type="scientific">Arabidopsis thaliana</name>
    <name type="common">Mouse-ear cress</name>
    <dbReference type="NCBI Taxonomy" id="3702"/>
    <lineage>
        <taxon>Eukaryota</taxon>
        <taxon>Viridiplantae</taxon>
        <taxon>Streptophyta</taxon>
        <taxon>Embryophyta</taxon>
        <taxon>Tracheophyta</taxon>
        <taxon>Spermatophyta</taxon>
        <taxon>Magnoliopsida</taxon>
        <taxon>eudicotyledons</taxon>
        <taxon>Gunneridae</taxon>
        <taxon>Pentapetalae</taxon>
        <taxon>rosids</taxon>
        <taxon>malvids</taxon>
        <taxon>Brassicales</taxon>
        <taxon>Brassicaceae</taxon>
        <taxon>Camelineae</taxon>
        <taxon>Arabidopsis</taxon>
    </lineage>
</organism>
<evidence type="ECO:0000250" key="1"/>
<evidence type="ECO:0000250" key="2">
    <source>
        <dbReference type="UniProtKB" id="Q8GZB6"/>
    </source>
</evidence>
<evidence type="ECO:0000255" key="3">
    <source>
        <dbReference type="PROSITE-ProRule" id="PRU00155"/>
    </source>
</evidence>
<evidence type="ECO:0000255" key="4">
    <source>
        <dbReference type="PROSITE-ProRule" id="PRU00157"/>
    </source>
</evidence>
<evidence type="ECO:0000255" key="5">
    <source>
        <dbReference type="PROSITE-ProRule" id="PRU00190"/>
    </source>
</evidence>
<evidence type="ECO:0000255" key="6">
    <source>
        <dbReference type="PROSITE-ProRule" id="PRU00358"/>
    </source>
</evidence>
<evidence type="ECO:0000255" key="7">
    <source>
        <dbReference type="PROSITE-ProRule" id="PRU00908"/>
    </source>
</evidence>
<evidence type="ECO:0000256" key="8">
    <source>
        <dbReference type="SAM" id="MobiDB-lite"/>
    </source>
</evidence>
<evidence type="ECO:0000305" key="9"/>
<protein>
    <recommendedName>
        <fullName>Histone-lysine N-methyltransferase, H3 lysine-9 specific SUVH7</fullName>
        <ecNumber evidence="2">2.1.1.-</ecNumber>
        <ecNumber evidence="2">2.1.1.367</ecNumber>
    </recommendedName>
    <alternativeName>
        <fullName>Histone H3-K9 methyltransferase 7</fullName>
        <shortName>H3-K9-HMTase 7</shortName>
    </alternativeName>
    <alternativeName>
        <fullName>Protein SET DOMAIN GROUP 17</fullName>
    </alternativeName>
    <alternativeName>
        <fullName>Suppressor of variegation 3-9 homolog protein 7</fullName>
        <shortName>Su(var)3-9 homolog protein 7</shortName>
    </alternativeName>
</protein>
<comment type="function">
    <text>Histone methyltransferase. Methylates 'Lys-9' of histone H3. H3 'Lys-9' methylation represents a specific tag for epigenetic transcriptional repression.</text>
</comment>
<comment type="catalytic activity">
    <reaction evidence="2">
        <text>N(6)-methyl-L-lysyl(9)-[histone H3] + S-adenosyl-L-methionine = N(6),N(6)-dimethyl-L-lysyl(9)-[histone H3] + S-adenosyl-L-homocysteine + H(+)</text>
        <dbReference type="Rhea" id="RHEA:60284"/>
        <dbReference type="Rhea" id="RHEA-COMP:15541"/>
        <dbReference type="Rhea" id="RHEA-COMP:15542"/>
        <dbReference type="ChEBI" id="CHEBI:15378"/>
        <dbReference type="ChEBI" id="CHEBI:57856"/>
        <dbReference type="ChEBI" id="CHEBI:59789"/>
        <dbReference type="ChEBI" id="CHEBI:61929"/>
        <dbReference type="ChEBI" id="CHEBI:61976"/>
    </reaction>
</comment>
<comment type="catalytic activity">
    <reaction evidence="2">
        <text>L-lysyl(9)-[histone H3] + S-adenosyl-L-methionine = N(6)-methyl-L-lysyl(9)-[histone H3] + S-adenosyl-L-homocysteine + H(+)</text>
        <dbReference type="Rhea" id="RHEA:60280"/>
        <dbReference type="Rhea" id="RHEA-COMP:15542"/>
        <dbReference type="Rhea" id="RHEA-COMP:15546"/>
        <dbReference type="ChEBI" id="CHEBI:15378"/>
        <dbReference type="ChEBI" id="CHEBI:29969"/>
        <dbReference type="ChEBI" id="CHEBI:57856"/>
        <dbReference type="ChEBI" id="CHEBI:59789"/>
        <dbReference type="ChEBI" id="CHEBI:61929"/>
        <dbReference type="EC" id="2.1.1.367"/>
    </reaction>
</comment>
<comment type="subcellular location">
    <subcellularLocation>
        <location evidence="6">Nucleus</location>
    </subcellularLocation>
    <subcellularLocation>
        <location evidence="1">Chromosome</location>
        <location evidence="1">Centromere</location>
    </subcellularLocation>
    <text evidence="1">Associates with centromeric constitutive heterochromatin.</text>
</comment>
<comment type="domain">
    <text>Although the SET domain contains the active site of enzymatic activity, both pre-SET and post-SET domains are required for methyltransferase activity.</text>
</comment>
<comment type="domain">
    <text evidence="1">In the pre-SET domain, Cys residues bind 3 zinc ions that are arranged in a triangular cluster; some of these Cys residues contribute to the binding of two zinc ions within the cluster.</text>
</comment>
<comment type="similarity">
    <text evidence="7">Belongs to the class V-like SAM-binding methyltransferase superfamily. Histone-lysine methyltransferase family. Suvar3-9 subfamily.</text>
</comment>
<comment type="sequence caution" evidence="9">
    <conflict type="erroneous gene model prediction">
        <sequence resource="EMBL-CDS" id="AAF97258"/>
    </conflict>
</comment>
<name>SUVH7_ARATH</name>
<gene>
    <name type="primary">SUVH7</name>
    <name type="synonym">SDG17</name>
    <name type="synonym">SET17</name>
    <name type="ordered locus">At1g17770</name>
    <name type="ORF">F2H15.1</name>
</gene>
<sequence>MDKSIPIKAIPVACVRPDLVDDVTKNTSTIPTMVSPVLTNMPSATSPLLMVPPLRTIWPSNKEWYDGDAGPSSTGPIKREASDNTNDTAHNTFAPPPEMVIPLITIRPSDDSSNYSCDAGAGPSTGPVKRGRGRPKGSKNSTPTEPKKPKVYDPNSLKVTSRGNFDSEITEAETETGNQEIVDSVMMRFDAVRRRLCQINHPEDILTTASGNCTKMGVKTNTRRRIGAVPGIHVGDIFYYWGEMCLVGLHKSNYGGIDFFTAAESAVEGHAAMCVVTAGQYDGETEGLDTLIYSGQGGTDVYGNARDQEMKGGNLALEASVSKGNDVRVVRGVIHPHENNQKIYIYDGMYLVSKFWTVTGKSGFKEFRFKLVRKPNQPPAYAIWKTVENLRNHDLIDSRQGFILEDLSFGAELLRVPLVNEVDEDDKTIPEDFDYIPSQCHSGMMTHEFHFDRQSLGCQNCRHQPCMHQNCTCVQRNGDLLPYHNNILVCRKPLIYECGGSCPCPDHCPTRLVQTGLKLHLEVFKTRNCGWGLRSWDPIRAGTFICEFAGLRKTKEEVEEDDDYLFDTSKIYQRFRWNYEPELLLEDSWEQVSEFINLPTQVLISAKEKGNVGRFMNHSCSPNVFWQPIEYENRGDVYLLIGLFAMKHIPPMTELTYDYGVSCVERSEEDEVLLYKGKKTCLCGSVKCRGSFT</sequence>
<feature type="chain" id="PRO_0000186078" description="Histone-lysine N-methyltransferase, H3 lysine-9 specific SUVH7">
    <location>
        <begin position="1"/>
        <end position="693"/>
    </location>
</feature>
<feature type="domain" description="YDG" evidence="6">
    <location>
        <begin position="227"/>
        <end position="373"/>
    </location>
</feature>
<feature type="domain" description="Pre-SET" evidence="4">
    <location>
        <begin position="454"/>
        <end position="516"/>
    </location>
</feature>
<feature type="domain" description="SET" evidence="5">
    <location>
        <begin position="519"/>
        <end position="660"/>
    </location>
</feature>
<feature type="domain" description="Post-SET" evidence="3">
    <location>
        <begin position="677"/>
        <end position="693"/>
    </location>
</feature>
<feature type="DNA-binding region" description="A.T hook">
    <location>
        <begin position="129"/>
        <end position="141"/>
    </location>
</feature>
<feature type="region of interest" description="Disordered" evidence="8">
    <location>
        <begin position="64"/>
        <end position="99"/>
    </location>
</feature>
<feature type="region of interest" description="Disordered" evidence="8">
    <location>
        <begin position="111"/>
        <end position="175"/>
    </location>
</feature>
<feature type="binding site" evidence="1">
    <location>
        <position position="458"/>
    </location>
    <ligand>
        <name>Zn(2+)</name>
        <dbReference type="ChEBI" id="CHEBI:29105"/>
        <label>1</label>
    </ligand>
</feature>
<feature type="binding site" evidence="1">
    <location>
        <position position="458"/>
    </location>
    <ligand>
        <name>Zn(2+)</name>
        <dbReference type="ChEBI" id="CHEBI:29105"/>
        <label>2</label>
    </ligand>
</feature>
<feature type="binding site" evidence="1">
    <location>
        <position position="461"/>
    </location>
    <ligand>
        <name>Zn(2+)</name>
        <dbReference type="ChEBI" id="CHEBI:29105"/>
        <label>1</label>
    </ligand>
</feature>
<feature type="binding site" evidence="1">
    <location>
        <position position="466"/>
    </location>
    <ligand>
        <name>Zn(2+)</name>
        <dbReference type="ChEBI" id="CHEBI:29105"/>
        <label>1</label>
    </ligand>
</feature>
<feature type="binding site" evidence="1">
    <location>
        <position position="466"/>
    </location>
    <ligand>
        <name>Zn(2+)</name>
        <dbReference type="ChEBI" id="CHEBI:29105"/>
        <label>3</label>
    </ligand>
</feature>
<feature type="binding site" evidence="1">
    <location>
        <position position="471"/>
    </location>
    <ligand>
        <name>Zn(2+)</name>
        <dbReference type="ChEBI" id="CHEBI:29105"/>
        <label>1</label>
    </ligand>
</feature>
<feature type="binding site" evidence="1">
    <location>
        <position position="473"/>
    </location>
    <ligand>
        <name>Zn(2+)</name>
        <dbReference type="ChEBI" id="CHEBI:29105"/>
        <label>2</label>
    </ligand>
</feature>
<feature type="binding site" evidence="1">
    <location>
        <position position="498"/>
    </location>
    <ligand>
        <name>Zn(2+)</name>
        <dbReference type="ChEBI" id="CHEBI:29105"/>
        <label>2</label>
    </ligand>
</feature>
<feature type="binding site" evidence="1">
    <location>
        <position position="498"/>
    </location>
    <ligand>
        <name>Zn(2+)</name>
        <dbReference type="ChEBI" id="CHEBI:29105"/>
        <label>3</label>
    </ligand>
</feature>
<feature type="binding site" evidence="1">
    <location>
        <position position="502"/>
    </location>
    <ligand>
        <name>Zn(2+)</name>
        <dbReference type="ChEBI" id="CHEBI:29105"/>
        <label>2</label>
    </ligand>
</feature>
<feature type="binding site" evidence="1">
    <location>
        <position position="504"/>
    </location>
    <ligand>
        <name>Zn(2+)</name>
        <dbReference type="ChEBI" id="CHEBI:29105"/>
        <label>3</label>
    </ligand>
</feature>
<feature type="binding site" evidence="1">
    <location>
        <position position="508"/>
    </location>
    <ligand>
        <name>Zn(2+)</name>
        <dbReference type="ChEBI" id="CHEBI:29105"/>
        <label>3</label>
    </ligand>
</feature>
<feature type="binding site" evidence="1">
    <location>
        <begin position="529"/>
        <end position="531"/>
    </location>
    <ligand>
        <name>S-adenosyl-L-methionine</name>
        <dbReference type="ChEBI" id="CHEBI:59789"/>
    </ligand>
</feature>
<feature type="binding site" evidence="5">
    <location>
        <position position="562"/>
    </location>
    <ligand>
        <name>S-adenosyl-L-methionine</name>
        <dbReference type="ChEBI" id="CHEBI:59789"/>
    </ligand>
</feature>
<feature type="binding site" evidence="5">
    <location>
        <position position="564"/>
    </location>
    <ligand>
        <name>S-adenosyl-L-methionine</name>
        <dbReference type="ChEBI" id="CHEBI:59789"/>
    </ligand>
</feature>
<feature type="binding site" evidence="5">
    <location>
        <position position="614"/>
    </location>
    <ligand>
        <name>S-adenosyl-L-methionine</name>
        <dbReference type="ChEBI" id="CHEBI:59789"/>
    </ligand>
</feature>
<feature type="binding site" evidence="1">
    <location>
        <begin position="617"/>
        <end position="618"/>
    </location>
    <ligand>
        <name>S-adenosyl-L-methionine</name>
        <dbReference type="ChEBI" id="CHEBI:59789"/>
    </ligand>
</feature>
<feature type="binding site" evidence="1">
    <location>
        <position position="620"/>
    </location>
    <ligand>
        <name>Zn(2+)</name>
        <dbReference type="ChEBI" id="CHEBI:29105"/>
        <label>4</label>
    </ligand>
</feature>
<feature type="binding site" evidence="1">
    <location>
        <position position="681"/>
    </location>
    <ligand>
        <name>Zn(2+)</name>
        <dbReference type="ChEBI" id="CHEBI:29105"/>
        <label>4</label>
    </ligand>
</feature>
<feature type="binding site" evidence="1">
    <location>
        <position position="683"/>
    </location>
    <ligand>
        <name>Zn(2+)</name>
        <dbReference type="ChEBI" id="CHEBI:29105"/>
        <label>4</label>
    </ligand>
</feature>
<feature type="binding site" evidence="1">
    <location>
        <position position="688"/>
    </location>
    <ligand>
        <name>Zn(2+)</name>
        <dbReference type="ChEBI" id="CHEBI:29105"/>
        <label>4</label>
    </ligand>
</feature>
<reference key="1">
    <citation type="journal article" date="2001" name="Nucleic Acids Res.">
        <title>The Arabidopsis thaliana genome contains at least 29 active genes encoding SET domain proteins that can be assigned to four evolutionarily conserved classes.</title>
        <authorList>
            <person name="Baumbusch L.O."/>
            <person name="Thorstensen T."/>
            <person name="Krauss V."/>
            <person name="Fischer A."/>
            <person name="Naumann K."/>
            <person name="Assalkhou R."/>
            <person name="Schulz I."/>
            <person name="Reuter G."/>
            <person name="Aalen R.B."/>
        </authorList>
    </citation>
    <scope>NUCLEOTIDE SEQUENCE [MRNA]</scope>
    <scope>NOMENCLATURE</scope>
</reference>
<reference key="2">
    <citation type="journal article" date="2000" name="Nature">
        <title>Sequence and analysis of chromosome 1 of the plant Arabidopsis thaliana.</title>
        <authorList>
            <person name="Theologis A."/>
            <person name="Ecker J.R."/>
            <person name="Palm C.J."/>
            <person name="Federspiel N.A."/>
            <person name="Kaul S."/>
            <person name="White O."/>
            <person name="Alonso J."/>
            <person name="Altafi H."/>
            <person name="Araujo R."/>
            <person name="Bowman C.L."/>
            <person name="Brooks S.Y."/>
            <person name="Buehler E."/>
            <person name="Chan A."/>
            <person name="Chao Q."/>
            <person name="Chen H."/>
            <person name="Cheuk R.F."/>
            <person name="Chin C.W."/>
            <person name="Chung M.K."/>
            <person name="Conn L."/>
            <person name="Conway A.B."/>
            <person name="Conway A.R."/>
            <person name="Creasy T.H."/>
            <person name="Dewar K."/>
            <person name="Dunn P."/>
            <person name="Etgu P."/>
            <person name="Feldblyum T.V."/>
            <person name="Feng J.-D."/>
            <person name="Fong B."/>
            <person name="Fujii C.Y."/>
            <person name="Gill J.E."/>
            <person name="Goldsmith A.D."/>
            <person name="Haas B."/>
            <person name="Hansen N.F."/>
            <person name="Hughes B."/>
            <person name="Huizar L."/>
            <person name="Hunter J.L."/>
            <person name="Jenkins J."/>
            <person name="Johnson-Hopson C."/>
            <person name="Khan S."/>
            <person name="Khaykin E."/>
            <person name="Kim C.J."/>
            <person name="Koo H.L."/>
            <person name="Kremenetskaia I."/>
            <person name="Kurtz D.B."/>
            <person name="Kwan A."/>
            <person name="Lam B."/>
            <person name="Langin-Hooper S."/>
            <person name="Lee A."/>
            <person name="Lee J.M."/>
            <person name="Lenz C.A."/>
            <person name="Li J.H."/>
            <person name="Li Y.-P."/>
            <person name="Lin X."/>
            <person name="Liu S.X."/>
            <person name="Liu Z.A."/>
            <person name="Luros J.S."/>
            <person name="Maiti R."/>
            <person name="Marziali A."/>
            <person name="Militscher J."/>
            <person name="Miranda M."/>
            <person name="Nguyen M."/>
            <person name="Nierman W.C."/>
            <person name="Osborne B.I."/>
            <person name="Pai G."/>
            <person name="Peterson J."/>
            <person name="Pham P.K."/>
            <person name="Rizzo M."/>
            <person name="Rooney T."/>
            <person name="Rowley D."/>
            <person name="Sakano H."/>
            <person name="Salzberg S.L."/>
            <person name="Schwartz J.R."/>
            <person name="Shinn P."/>
            <person name="Southwick A.M."/>
            <person name="Sun H."/>
            <person name="Tallon L.J."/>
            <person name="Tambunga G."/>
            <person name="Toriumi M.J."/>
            <person name="Town C.D."/>
            <person name="Utterback T."/>
            <person name="Van Aken S."/>
            <person name="Vaysberg M."/>
            <person name="Vysotskaia V.S."/>
            <person name="Walker M."/>
            <person name="Wu D."/>
            <person name="Yu G."/>
            <person name="Fraser C.M."/>
            <person name="Venter J.C."/>
            <person name="Davis R.W."/>
        </authorList>
    </citation>
    <scope>NUCLEOTIDE SEQUENCE [LARGE SCALE GENOMIC DNA]</scope>
    <source>
        <strain>cv. Columbia</strain>
    </source>
</reference>
<reference key="3">
    <citation type="journal article" date="2017" name="Plant J.">
        <title>Araport11: a complete reannotation of the Arabidopsis thaliana reference genome.</title>
        <authorList>
            <person name="Cheng C.Y."/>
            <person name="Krishnakumar V."/>
            <person name="Chan A.P."/>
            <person name="Thibaud-Nissen F."/>
            <person name="Schobel S."/>
            <person name="Town C.D."/>
        </authorList>
    </citation>
    <scope>GENOME REANNOTATION</scope>
    <source>
        <strain>cv. Columbia</strain>
    </source>
</reference>
<reference key="4">
    <citation type="journal article" date="2006" name="J. Plant Physiol.">
        <title>Heterochromatin proteins and the control of heterochromatic gene silencing in Arabidopsis.</title>
        <authorList>
            <person name="Fischer A."/>
            <person name="Hofmann I."/>
            <person name="Naumann K."/>
            <person name="Reuter G."/>
        </authorList>
    </citation>
    <scope>GENE FAMILY</scope>
</reference>
<proteinExistence type="evidence at transcript level"/>